<gene>
    <name type="primary">srb10</name>
    <name type="synonym">cdk8</name>
    <name type="synonym">prk1</name>
    <name type="ORF">SPAC23H4.17c</name>
</gene>
<protein>
    <recommendedName>
        <fullName>Serine/threonine-protein kinase srb10</fullName>
        <ecNumber>2.7.11.22</ecNumber>
        <ecNumber>2.7.11.23</ecNumber>
    </recommendedName>
    <alternativeName>
        <fullName>Cyclin-dependent kinase 8</fullName>
    </alternativeName>
    <alternativeName>
        <fullName>Suppressor of RNA polymerase B srb10</fullName>
    </alternativeName>
</protein>
<organism>
    <name type="scientific">Schizosaccharomyces pombe (strain 972 / ATCC 24843)</name>
    <name type="common">Fission yeast</name>
    <dbReference type="NCBI Taxonomy" id="284812"/>
    <lineage>
        <taxon>Eukaryota</taxon>
        <taxon>Fungi</taxon>
        <taxon>Dikarya</taxon>
        <taxon>Ascomycota</taxon>
        <taxon>Taphrinomycotina</taxon>
        <taxon>Schizosaccharomycetes</taxon>
        <taxon>Schizosaccharomycetales</taxon>
        <taxon>Schizosaccharomycetaceae</taxon>
        <taxon>Schizosaccharomyces</taxon>
    </lineage>
</organism>
<keyword id="KW-0010">Activator</keyword>
<keyword id="KW-0067">ATP-binding</keyword>
<keyword id="KW-0418">Kinase</keyword>
<keyword id="KW-0460">Magnesium</keyword>
<keyword id="KW-0479">Metal-binding</keyword>
<keyword id="KW-0547">Nucleotide-binding</keyword>
<keyword id="KW-0539">Nucleus</keyword>
<keyword id="KW-1185">Reference proteome</keyword>
<keyword id="KW-0678">Repressor</keyword>
<keyword id="KW-0723">Serine/threonine-protein kinase</keyword>
<keyword id="KW-0804">Transcription</keyword>
<keyword id="KW-0805">Transcription regulation</keyword>
<keyword id="KW-0808">Transferase</keyword>
<accession>O13958</accession>
<proteinExistence type="evidence at protein level"/>
<comment type="function">
    <text evidence="4">Catalytic component of the Cdk8 module/Srb8-11 module which is a regulatory module of the Mediator complex that regulates basal RNA polymerase II transcription. The Cdk8 module may sterically hinder the interaction between Mediator and RNA polymerase II leading to transcriptional repression of a subset of genes regulated by Mediator.</text>
</comment>
<comment type="catalytic activity">
    <reaction>
        <text>L-seryl-[protein] + ATP = O-phospho-L-seryl-[protein] + ADP + H(+)</text>
        <dbReference type="Rhea" id="RHEA:17989"/>
        <dbReference type="Rhea" id="RHEA-COMP:9863"/>
        <dbReference type="Rhea" id="RHEA-COMP:11604"/>
        <dbReference type="ChEBI" id="CHEBI:15378"/>
        <dbReference type="ChEBI" id="CHEBI:29999"/>
        <dbReference type="ChEBI" id="CHEBI:30616"/>
        <dbReference type="ChEBI" id="CHEBI:83421"/>
        <dbReference type="ChEBI" id="CHEBI:456216"/>
        <dbReference type="EC" id="2.7.11.22"/>
    </reaction>
</comment>
<comment type="catalytic activity">
    <reaction>
        <text>L-threonyl-[protein] + ATP = O-phospho-L-threonyl-[protein] + ADP + H(+)</text>
        <dbReference type="Rhea" id="RHEA:46608"/>
        <dbReference type="Rhea" id="RHEA-COMP:11060"/>
        <dbReference type="Rhea" id="RHEA-COMP:11605"/>
        <dbReference type="ChEBI" id="CHEBI:15378"/>
        <dbReference type="ChEBI" id="CHEBI:30013"/>
        <dbReference type="ChEBI" id="CHEBI:30616"/>
        <dbReference type="ChEBI" id="CHEBI:61977"/>
        <dbReference type="ChEBI" id="CHEBI:456216"/>
        <dbReference type="EC" id="2.7.11.22"/>
    </reaction>
</comment>
<comment type="catalytic activity">
    <reaction>
        <text>[DNA-directed RNA polymerase] + ATP = phospho-[DNA-directed RNA polymerase] + ADP + H(+)</text>
        <dbReference type="Rhea" id="RHEA:10216"/>
        <dbReference type="Rhea" id="RHEA-COMP:11321"/>
        <dbReference type="Rhea" id="RHEA-COMP:11322"/>
        <dbReference type="ChEBI" id="CHEBI:15378"/>
        <dbReference type="ChEBI" id="CHEBI:30616"/>
        <dbReference type="ChEBI" id="CHEBI:43176"/>
        <dbReference type="ChEBI" id="CHEBI:68546"/>
        <dbReference type="ChEBI" id="CHEBI:456216"/>
        <dbReference type="EC" id="2.7.11.23"/>
    </reaction>
</comment>
<comment type="subunit">
    <text evidence="3 5">Component of the Cdk8 module of the Mediator complex. The Cdk8 module is composed of srb8, srb9, srb10 and srb11. Interacts with med17 and med18.</text>
</comment>
<comment type="subcellular location">
    <subcellularLocation>
        <location evidence="6">Nucleus</location>
    </subcellularLocation>
</comment>
<comment type="similarity">
    <text evidence="6">Belongs to the protein kinase superfamily. CMGC Ser/Thr protein kinase family. CDC2/CDKX subfamily.</text>
</comment>
<dbReference type="EC" id="2.7.11.22"/>
<dbReference type="EC" id="2.7.11.23"/>
<dbReference type="EMBL" id="CU329670">
    <property type="protein sequence ID" value="CAB11671.2"/>
    <property type="molecule type" value="Genomic_DNA"/>
</dbReference>
<dbReference type="PIR" id="T38311">
    <property type="entry name" value="T38311"/>
</dbReference>
<dbReference type="RefSeq" id="NP_593389.2">
    <property type="nucleotide sequence ID" value="NM_001018821.2"/>
</dbReference>
<dbReference type="SMR" id="O13958"/>
<dbReference type="BioGRID" id="278390">
    <property type="interactions" value="252"/>
</dbReference>
<dbReference type="FunCoup" id="O13958">
    <property type="interactions" value="1036"/>
</dbReference>
<dbReference type="STRING" id="284812.O13958"/>
<dbReference type="iPTMnet" id="O13958"/>
<dbReference type="PaxDb" id="4896-SPAC23H4.17c.1"/>
<dbReference type="EnsemblFungi" id="SPAC23H4.17c.1">
    <property type="protein sequence ID" value="SPAC23H4.17c.1:pep"/>
    <property type="gene ID" value="SPAC23H4.17c"/>
</dbReference>
<dbReference type="GeneID" id="2541900"/>
<dbReference type="KEGG" id="spo:2541900"/>
<dbReference type="PomBase" id="SPAC23H4.17c">
    <property type="gene designation" value="srb10"/>
</dbReference>
<dbReference type="VEuPathDB" id="FungiDB:SPAC23H4.17c"/>
<dbReference type="eggNOG" id="KOG0666">
    <property type="taxonomic scope" value="Eukaryota"/>
</dbReference>
<dbReference type="HOGENOM" id="CLU_000288_181_6_1"/>
<dbReference type="InParanoid" id="O13958"/>
<dbReference type="OMA" id="YFKNGGP"/>
<dbReference type="BRENDA" id="2.7.11.22">
    <property type="organism ID" value="5613"/>
</dbReference>
<dbReference type="PRO" id="PR:O13958"/>
<dbReference type="Proteomes" id="UP000002485">
    <property type="component" value="Chromosome I"/>
</dbReference>
<dbReference type="GO" id="GO:0000791">
    <property type="term" value="C:euchromatin"/>
    <property type="evidence" value="ECO:0000314"/>
    <property type="project" value="PomBase"/>
</dbReference>
<dbReference type="GO" id="GO:0016592">
    <property type="term" value="C:mediator complex"/>
    <property type="evidence" value="ECO:0000353"/>
    <property type="project" value="PomBase"/>
</dbReference>
<dbReference type="GO" id="GO:0005634">
    <property type="term" value="C:nucleus"/>
    <property type="evidence" value="ECO:0000318"/>
    <property type="project" value="GO_Central"/>
</dbReference>
<dbReference type="GO" id="GO:0005524">
    <property type="term" value="F:ATP binding"/>
    <property type="evidence" value="ECO:0000255"/>
    <property type="project" value="PomBase"/>
</dbReference>
<dbReference type="GO" id="GO:0004693">
    <property type="term" value="F:cyclin-dependent protein serine/threonine kinase activity"/>
    <property type="evidence" value="ECO:0000314"/>
    <property type="project" value="PomBase"/>
</dbReference>
<dbReference type="GO" id="GO:0046872">
    <property type="term" value="F:metal ion binding"/>
    <property type="evidence" value="ECO:0007669"/>
    <property type="project" value="UniProtKB-KW"/>
</dbReference>
<dbReference type="GO" id="GO:0106310">
    <property type="term" value="F:protein serine kinase activity"/>
    <property type="evidence" value="ECO:0007669"/>
    <property type="project" value="RHEA"/>
</dbReference>
<dbReference type="GO" id="GO:0140834">
    <property type="term" value="F:RNA polymerase II CTD heptapeptide repeat S2 kinase activity"/>
    <property type="evidence" value="ECO:0000304"/>
    <property type="project" value="PomBase"/>
</dbReference>
<dbReference type="GO" id="GO:0140836">
    <property type="term" value="F:RNA polymerase II CTD heptapeptide repeat S5 kinase activity"/>
    <property type="evidence" value="ECO:0000304"/>
    <property type="project" value="PomBase"/>
</dbReference>
<dbReference type="GO" id="GO:0003713">
    <property type="term" value="F:transcription coactivator activity"/>
    <property type="evidence" value="ECO:0000305"/>
    <property type="project" value="PomBase"/>
</dbReference>
<dbReference type="GO" id="GO:0045944">
    <property type="term" value="P:positive regulation of transcription by RNA polymerase II"/>
    <property type="evidence" value="ECO:0000315"/>
    <property type="project" value="PomBase"/>
</dbReference>
<dbReference type="GO" id="GO:0060261">
    <property type="term" value="P:positive regulation of transcription initiation by RNA polymerase II"/>
    <property type="evidence" value="ECO:0000305"/>
    <property type="project" value="PomBase"/>
</dbReference>
<dbReference type="CDD" id="cd07842">
    <property type="entry name" value="STKc_CDK8_like"/>
    <property type="match status" value="1"/>
</dbReference>
<dbReference type="FunFam" id="1.10.510.10:FF:000408">
    <property type="entry name" value="Serine/threonine-protein kinase SSN3"/>
    <property type="match status" value="1"/>
</dbReference>
<dbReference type="Gene3D" id="3.30.200.20">
    <property type="entry name" value="Phosphorylase Kinase, domain 1"/>
    <property type="match status" value="1"/>
</dbReference>
<dbReference type="Gene3D" id="1.10.510.10">
    <property type="entry name" value="Transferase(Phosphotransferase) domain 1"/>
    <property type="match status" value="1"/>
</dbReference>
<dbReference type="InterPro" id="IPR050108">
    <property type="entry name" value="CDK"/>
</dbReference>
<dbReference type="InterPro" id="IPR011009">
    <property type="entry name" value="Kinase-like_dom_sf"/>
</dbReference>
<dbReference type="InterPro" id="IPR000719">
    <property type="entry name" value="Prot_kinase_dom"/>
</dbReference>
<dbReference type="InterPro" id="IPR008271">
    <property type="entry name" value="Ser/Thr_kinase_AS"/>
</dbReference>
<dbReference type="PANTHER" id="PTHR24056">
    <property type="entry name" value="CELL DIVISION PROTEIN KINASE"/>
    <property type="match status" value="1"/>
</dbReference>
<dbReference type="PANTHER" id="PTHR24056:SF495">
    <property type="entry name" value="CYCLIN-DEPENDENT KINASE 8-RELATED"/>
    <property type="match status" value="1"/>
</dbReference>
<dbReference type="Pfam" id="PF00069">
    <property type="entry name" value="Pkinase"/>
    <property type="match status" value="1"/>
</dbReference>
<dbReference type="SMART" id="SM00220">
    <property type="entry name" value="S_TKc"/>
    <property type="match status" value="1"/>
</dbReference>
<dbReference type="SUPFAM" id="SSF56112">
    <property type="entry name" value="Protein kinase-like (PK-like)"/>
    <property type="match status" value="1"/>
</dbReference>
<dbReference type="PROSITE" id="PS50011">
    <property type="entry name" value="PROTEIN_KINASE_DOM"/>
    <property type="match status" value="1"/>
</dbReference>
<dbReference type="PROSITE" id="PS00108">
    <property type="entry name" value="PROTEIN_KINASE_ST"/>
    <property type="match status" value="1"/>
</dbReference>
<name>SSN3_SCHPO</name>
<feature type="chain" id="PRO_0000086580" description="Serine/threonine-protein kinase srb10">
    <location>
        <begin position="1"/>
        <end position="369"/>
    </location>
</feature>
<feature type="domain" description="Protein kinase" evidence="1">
    <location>
        <begin position="5"/>
        <end position="319"/>
    </location>
</feature>
<feature type="active site" description="Proton acceptor" evidence="1 2">
    <location>
        <position position="140"/>
    </location>
</feature>
<feature type="binding site" evidence="1">
    <location>
        <begin position="11"/>
        <end position="19"/>
    </location>
    <ligand>
        <name>ATP</name>
        <dbReference type="ChEBI" id="CHEBI:30616"/>
    </ligand>
</feature>
<feature type="binding site" evidence="1">
    <location>
        <position position="36"/>
    </location>
    <ligand>
        <name>ATP</name>
        <dbReference type="ChEBI" id="CHEBI:30616"/>
    </ligand>
</feature>
<feature type="mutagenesis site" description="Abrogates kinase activity." evidence="5">
    <original>D</original>
    <variation>A</variation>
    <location>
        <position position="158"/>
    </location>
</feature>
<evidence type="ECO:0000255" key="1">
    <source>
        <dbReference type="PROSITE-ProRule" id="PRU00159"/>
    </source>
</evidence>
<evidence type="ECO:0000255" key="2">
    <source>
        <dbReference type="PROSITE-ProRule" id="PRU10027"/>
    </source>
</evidence>
<evidence type="ECO:0000269" key="3">
    <source>
    </source>
</evidence>
<evidence type="ECO:0000269" key="4">
    <source>
    </source>
</evidence>
<evidence type="ECO:0000269" key="5">
    <source>
    </source>
</evidence>
<evidence type="ECO:0000305" key="6"/>
<sequence length="369" mass="42585">MKDGYKIIGFISSGTYGKVYKAVSSNSNDKRLFAIKKFKAESKQVSSNAQQTGVSQSAIREMMLCREIQHENIVSLVQVLLKDGTISMVFEYAEHDLLQIIHFHSRSRTRQIPPSILKSILWQIINGVAYLHENWIMHRDLKPANIMITATGKVKIGDLGLGRLIRDPILPFYSSDRVVVTIWYRAPELLLGAHDYTPAIDVWAIGCIYGEMLALSPLFKGDEIKMEDKKVVPFQSTQMLRIMELLGTPTEERWPGLKNYPEYYQLSSFEVRYWNNLLPQWYQTVKNRDPQGLDLLMKMLQYDPKSRITAKQALEHVFFTSDKLWTTSPFLNQPIHYPERRISEDDSEVSSKRVLSTSLRSESKRFKGN</sequence>
<reference key="1">
    <citation type="journal article" date="1998" name="Yeast">
        <title>Characterization of the prk1 protein kinase from Schizosaccharomyces pombe.</title>
        <authorList>
            <person name="Watson P."/>
            <person name="Davey J."/>
        </authorList>
    </citation>
    <scope>NUCLEOTIDE SEQUENCE [GENOMIC DNA]</scope>
</reference>
<reference key="2">
    <citation type="journal article" date="2002" name="Nature">
        <title>The genome sequence of Schizosaccharomyces pombe.</title>
        <authorList>
            <person name="Wood V."/>
            <person name="Gwilliam R."/>
            <person name="Rajandream M.A."/>
            <person name="Lyne M.H."/>
            <person name="Lyne R."/>
            <person name="Stewart A."/>
            <person name="Sgouros J.G."/>
            <person name="Peat N."/>
            <person name="Hayles J."/>
            <person name="Baker S.G."/>
            <person name="Basham D."/>
            <person name="Bowman S."/>
            <person name="Brooks K."/>
            <person name="Brown D."/>
            <person name="Brown S."/>
            <person name="Chillingworth T."/>
            <person name="Churcher C.M."/>
            <person name="Collins M."/>
            <person name="Connor R."/>
            <person name="Cronin A."/>
            <person name="Davis P."/>
            <person name="Feltwell T."/>
            <person name="Fraser A."/>
            <person name="Gentles S."/>
            <person name="Goble A."/>
            <person name="Hamlin N."/>
            <person name="Harris D.E."/>
            <person name="Hidalgo J."/>
            <person name="Hodgson G."/>
            <person name="Holroyd S."/>
            <person name="Hornsby T."/>
            <person name="Howarth S."/>
            <person name="Huckle E.J."/>
            <person name="Hunt S."/>
            <person name="Jagels K."/>
            <person name="James K.D."/>
            <person name="Jones L."/>
            <person name="Jones M."/>
            <person name="Leather S."/>
            <person name="McDonald S."/>
            <person name="McLean J."/>
            <person name="Mooney P."/>
            <person name="Moule S."/>
            <person name="Mungall K.L."/>
            <person name="Murphy L.D."/>
            <person name="Niblett D."/>
            <person name="Odell C."/>
            <person name="Oliver K."/>
            <person name="O'Neil S."/>
            <person name="Pearson D."/>
            <person name="Quail M.A."/>
            <person name="Rabbinowitsch E."/>
            <person name="Rutherford K.M."/>
            <person name="Rutter S."/>
            <person name="Saunders D."/>
            <person name="Seeger K."/>
            <person name="Sharp S."/>
            <person name="Skelton J."/>
            <person name="Simmonds M.N."/>
            <person name="Squares R."/>
            <person name="Squares S."/>
            <person name="Stevens K."/>
            <person name="Taylor K."/>
            <person name="Taylor R.G."/>
            <person name="Tivey A."/>
            <person name="Walsh S.V."/>
            <person name="Warren T."/>
            <person name="Whitehead S."/>
            <person name="Woodward J.R."/>
            <person name="Volckaert G."/>
            <person name="Aert R."/>
            <person name="Robben J."/>
            <person name="Grymonprez B."/>
            <person name="Weltjens I."/>
            <person name="Vanstreels E."/>
            <person name="Rieger M."/>
            <person name="Schaefer M."/>
            <person name="Mueller-Auer S."/>
            <person name="Gabel C."/>
            <person name="Fuchs M."/>
            <person name="Duesterhoeft A."/>
            <person name="Fritzc C."/>
            <person name="Holzer E."/>
            <person name="Moestl D."/>
            <person name="Hilbert H."/>
            <person name="Borzym K."/>
            <person name="Langer I."/>
            <person name="Beck A."/>
            <person name="Lehrach H."/>
            <person name="Reinhardt R."/>
            <person name="Pohl T.M."/>
            <person name="Eger P."/>
            <person name="Zimmermann W."/>
            <person name="Wedler H."/>
            <person name="Wambutt R."/>
            <person name="Purnelle B."/>
            <person name="Goffeau A."/>
            <person name="Cadieu E."/>
            <person name="Dreano S."/>
            <person name="Gloux S."/>
            <person name="Lelaure V."/>
            <person name="Mottier S."/>
            <person name="Galibert F."/>
            <person name="Aves S.J."/>
            <person name="Xiang Z."/>
            <person name="Hunt C."/>
            <person name="Moore K."/>
            <person name="Hurst S.M."/>
            <person name="Lucas M."/>
            <person name="Rochet M."/>
            <person name="Gaillardin C."/>
            <person name="Tallada V.A."/>
            <person name="Garzon A."/>
            <person name="Thode G."/>
            <person name="Daga R.R."/>
            <person name="Cruzado L."/>
            <person name="Jimenez J."/>
            <person name="Sanchez M."/>
            <person name="del Rey F."/>
            <person name="Benito J."/>
            <person name="Dominguez A."/>
            <person name="Revuelta J.L."/>
            <person name="Moreno S."/>
            <person name="Armstrong J."/>
            <person name="Forsburg S.L."/>
            <person name="Cerutti L."/>
            <person name="Lowe T."/>
            <person name="McCombie W.R."/>
            <person name="Paulsen I."/>
            <person name="Potashkin J."/>
            <person name="Shpakovski G.V."/>
            <person name="Ussery D."/>
            <person name="Barrell B.G."/>
            <person name="Nurse P."/>
        </authorList>
    </citation>
    <scope>NUCLEOTIDE SEQUENCE [LARGE SCALE GENOMIC DNA]</scope>
    <source>
        <strain>972 / ATCC 24843</strain>
    </source>
</reference>
<reference key="3">
    <citation type="journal article" date="2011" name="Science">
        <title>Comparative functional genomics of the fission yeasts.</title>
        <authorList>
            <person name="Rhind N."/>
            <person name="Chen Z."/>
            <person name="Yassour M."/>
            <person name="Thompson D.A."/>
            <person name="Haas B.J."/>
            <person name="Habib N."/>
            <person name="Wapinski I."/>
            <person name="Roy S."/>
            <person name="Lin M.F."/>
            <person name="Heiman D.I."/>
            <person name="Young S.K."/>
            <person name="Furuya K."/>
            <person name="Guo Y."/>
            <person name="Pidoux A."/>
            <person name="Chen H.M."/>
            <person name="Robbertse B."/>
            <person name="Goldberg J.M."/>
            <person name="Aoki K."/>
            <person name="Bayne E.H."/>
            <person name="Berlin A.M."/>
            <person name="Desjardins C.A."/>
            <person name="Dobbs E."/>
            <person name="Dukaj L."/>
            <person name="Fan L."/>
            <person name="FitzGerald M.G."/>
            <person name="French C."/>
            <person name="Gujja S."/>
            <person name="Hansen K."/>
            <person name="Keifenheim D."/>
            <person name="Levin J.Z."/>
            <person name="Mosher R.A."/>
            <person name="Mueller C.A."/>
            <person name="Pfiffner J."/>
            <person name="Priest M."/>
            <person name="Russ C."/>
            <person name="Smialowska A."/>
            <person name="Swoboda P."/>
            <person name="Sykes S.M."/>
            <person name="Vaughn M."/>
            <person name="Vengrova S."/>
            <person name="Yoder R."/>
            <person name="Zeng Q."/>
            <person name="Allshire R."/>
            <person name="Baulcombe D."/>
            <person name="Birren B.W."/>
            <person name="Brown W."/>
            <person name="Ekwall K."/>
            <person name="Kellis M."/>
            <person name="Leatherwood J."/>
            <person name="Levin H."/>
            <person name="Margalit H."/>
            <person name="Martienssen R."/>
            <person name="Nieduszynski C.A."/>
            <person name="Spatafora J.W."/>
            <person name="Friedman N."/>
            <person name="Dalgaard J.Z."/>
            <person name="Baumann P."/>
            <person name="Niki H."/>
            <person name="Regev A."/>
            <person name="Nusbaum C."/>
        </authorList>
    </citation>
    <scope>REVISION OF GENE MODEL</scope>
</reference>
<reference key="4">
    <citation type="journal article" date="2003" name="Proc. Natl. Acad. Sci. U.S.A.">
        <title>TRAP230/ARC240 and TRAP240/ARC250 Mediator subunits are functionally conserved through evolution.</title>
        <authorList>
            <person name="Samuelsen C.O."/>
            <person name="Baraznenok V."/>
            <person name="Khorosjutina O."/>
            <person name="Spaehr H."/>
            <person name="Kieselbach T."/>
            <person name="Holmberg S."/>
            <person name="Gustafsson C.M."/>
        </authorList>
    </citation>
    <scope>IDENTIFICATION IN MEDIATOR COMPLEX</scope>
</reference>
<reference key="5">
    <citation type="journal article" date="2003" name="J. Biol. Chem.">
        <title>Mediator influences Schizosaccharomyces pombe RNA polymerase II-dependent transcription in vitro.</title>
        <authorList>
            <person name="Spaehr H."/>
            <person name="Khorosjutina O."/>
            <person name="Baraznenok V."/>
            <person name="Linder T."/>
            <person name="Samuelsen C.O."/>
            <person name="Hermand D."/>
            <person name="Maekelae T.P."/>
            <person name="Holmberg S."/>
            <person name="Gustafsson C.M."/>
        </authorList>
    </citation>
    <scope>FUNCTION</scope>
</reference>
<reference key="6">
    <citation type="journal article" date="2006" name="Proc. Natl. Acad. Sci. U.S.A.">
        <title>The cyclin-dependent kinase 8 module sterically blocks Mediator interactions with RNA polymerase II.</title>
        <authorList>
            <person name="Elmlund H."/>
            <person name="Baraznenok V."/>
            <person name="Lindahl M."/>
            <person name="Samuelsen C.O."/>
            <person name="Koeck P.J.B."/>
            <person name="Holmberg S."/>
            <person name="Hebert H."/>
            <person name="Gustafsson C.M."/>
        </authorList>
    </citation>
    <scope>ELECTRON MICROSCOPY OF THE MEDIATOR COMPLEX IN COMPLEX WITH RNA POLYMERASE II</scope>
    <scope>INTERACTION WITH MED17 AND MED18</scope>
    <scope>MUTAGENESIS OF ASP-158</scope>
</reference>